<proteinExistence type="evidence at protein level"/>
<comment type="function">
    <text evidence="2">Probable catalytic subunit of the acryloyl-CoA reductase complex involved in the pathway of L-alanine fermentation. Catalyzes the irreversible NADH-dependent formation of propionyl-CoA from acryloyl-CoA. It can also use 3-buten-2-one as substrate.</text>
</comment>
<comment type="catalytic activity">
    <reaction evidence="2">
        <text>propanoyl-CoA + NAD(+) = acryloyl-CoA + NADH + H(+)</text>
        <dbReference type="Rhea" id="RHEA:34471"/>
        <dbReference type="ChEBI" id="CHEBI:15378"/>
        <dbReference type="ChEBI" id="CHEBI:57367"/>
        <dbReference type="ChEBI" id="CHEBI:57392"/>
        <dbReference type="ChEBI" id="CHEBI:57540"/>
        <dbReference type="ChEBI" id="CHEBI:57945"/>
        <dbReference type="EC" id="1.3.1.95"/>
    </reaction>
</comment>
<comment type="cofactor">
    <cofactor evidence="2">
        <name>FAD</name>
        <dbReference type="ChEBI" id="CHEBI:57692"/>
    </cofactor>
</comment>
<comment type="biophysicochemical properties">
    <kinetics>
        <KM evidence="2">2 uM for acryloyl-CoA (with NADH as electron acceptor at pH 7.5 and 25 degrees Celsius)</KM>
        <KM evidence="2">8 uM for NADH (at pH 7.5 and 25 degrees Celsius)</KM>
        <KM evidence="2">50 uM for propionyl-CoA (with of ferricenium hexafluorophosphate as electron acceptor at pH 7.5 and 25 degrees Celsius)</KM>
        <KM evidence="2">100 uM for butyryl-CoA (with of ferricenium hexafluorophosphate as electron acceptor at pH 7.5 and 25 degrees Celsius)</KM>
        <KM evidence="2">1800 uM for 3-buten-2-one (with NADH as electron acceptor at pH 7.5 and 25 degrees Celsius)</KM>
        <Vmax evidence="2">0.8 umol/min/mg enzyme with propionyl-CoA as substrate (with ferricenium hexafluorophosphate as electron acceptor at pH 7.5 and 25 degrees Celsius)</Vmax>
        <Vmax evidence="2">1.4 umol/min/mg enzyme with butyryl-CoA as substrate (with ferricenium hexafluorophosphate as electron acceptor at pH 7.5 and 25 degrees Celsius)</Vmax>
        <Vmax evidence="2">1.4 umol/min/mg enzyme with NADH as substrate (at pH 7.5 and 25 degrees Celsius)</Vmax>
        <Vmax evidence="2">1.8 umol/min/mg enzyme with acryloyl-CoA as substrate (with NADH as electron acceptor at pH 7.5 and 25 degrees Celsius)</Vmax>
        <Vmax evidence="2">11.6 umol/min/mg enzyme with 3-buten-2-one as substrate (with NADH as electron acceptor at pH 7.5 and 25 degrees Celsius)</Vmax>
        <text>kcat is 4.5 sec(-1), 29 sec(-1), 2 sec(-1) and 3.5 sec(-1) for acryloyl-CoA, 3-buten-2-one, propionyl-CoA and butyryl-CoA, respectively (at pH 7.5 and 25 degrees Celsius).</text>
    </kinetics>
    <phDependence>
        <text evidence="2">Optimum pH is between 6.5 and 7.</text>
    </phDependence>
    <temperatureDependence>
        <text evidence="2">In the range between 25 and 55 degrees Celsius, the activity increases with rising temperature. Above 55 degrees Celsius, it decreases and becomes almost zero at 65 degrees Celsius.</text>
    </temperatureDependence>
</comment>
<comment type="subunit">
    <text evidence="2">Heterohexadecamer; tetramer of tetramers. Each tetramer is composed of 2 alpha (AcrC), a beta (AcrA) and a gamma (AcrB) subunit.</text>
</comment>
<comment type="subcellular location">
    <subcellularLocation>
        <location evidence="2">Cytoplasm</location>
    </subcellularLocation>
</comment>
<comment type="mass spectrometry"/>
<comment type="similarity">
    <text evidence="3">Belongs to the acyl-CoA dehydrogenase family.</text>
</comment>
<protein>
    <recommendedName>
        <fullName>Acryloyl-CoA reductase (NADH)</fullName>
        <ecNumber>1.3.1.95</ecNumber>
    </recommendedName>
    <alternativeName>
        <fullName>Propionyl-CoA dehydrogenase</fullName>
    </alternativeName>
</protein>
<evidence type="ECO:0000250" key="1"/>
<evidence type="ECO:0000269" key="2">
    <source>
    </source>
</evidence>
<evidence type="ECO:0000305" key="3"/>
<reference key="1">
    <citation type="submission" date="2011-07" db="EMBL/GenBank/DDBJ databases">
        <authorList>
            <person name="Poehlein A."/>
            <person name="Schlien K."/>
            <person name="Daniel R."/>
            <person name="Gottschalk G."/>
            <person name="Buckel W."/>
        </authorList>
    </citation>
    <scope>NUCLEOTIDE SEQUENCE [GENOMIC DNA]</scope>
    <source>
        <strain>ATCC 25522 / DSM 1682 / JCM 1430 / NCIMB 10656 / VPI 5303 / X2</strain>
    </source>
</reference>
<reference key="2">
    <citation type="journal article" date="2013" name="Appl. Microbiol. Biotechnol.">
        <title>Engineering Escherichia coli with acrylate pathway genes for propionic acid synthesis and its impact on mixed-acid fermentation.</title>
        <authorList>
            <person name="Kandasamy V."/>
            <person name="Vaidyanathan H."/>
            <person name="Djurdjevic I."/>
            <person name="Jayamani E."/>
            <person name="Ramachandran K.B."/>
            <person name="Buckel W."/>
            <person name="Jayaraman G."/>
            <person name="Ramalingam S."/>
        </authorList>
    </citation>
    <scope>NUCLEOTIDE SEQUENCE [GENOMIC DNA]</scope>
    <source>
        <strain>ATCC 25522 / DSM 1682 / JCM 1430 / NCIMB 10656 / VPI 5303 / X2</strain>
    </source>
</reference>
<reference key="3">
    <citation type="journal article" date="2003" name="Eur. J. Biochem.">
        <title>Acryloyl-CoA reductase from Clostridium propionicum. An enzyme complex of propionyl-CoA dehydrogenase and electron-transferring flavoprotein.</title>
        <authorList>
            <person name="Hetzel M."/>
            <person name="Brock M."/>
            <person name="Selmer T."/>
            <person name="Pierik A.J."/>
            <person name="Golding B.T."/>
            <person name="Buckel W."/>
        </authorList>
    </citation>
    <scope>FUNCTION</scope>
    <scope>CATALYTIC ACTIVITY</scope>
    <scope>COFACTOR</scope>
    <scope>BIOPHYSICOCHEMICAL PROPERTIES</scope>
    <scope>SUBCELLULAR LOCATION</scope>
    <scope>MASS SPECTROMETRY</scope>
    <scope>SUBSTRATE SPECIFICITY</scope>
    <scope>SUBUNIT</scope>
    <source>
        <strain>ATCC 25522 / DSM 1682 / JCM 1430 / NCIMB 10656 / VPI 5303 / X2</strain>
    </source>
</reference>
<accession>G3KIM8</accession>
<keyword id="KW-0963">Cytoplasm</keyword>
<keyword id="KW-0274">FAD</keyword>
<keyword id="KW-0285">Flavoprotein</keyword>
<keyword id="KW-0520">NAD</keyword>
<keyword id="KW-0560">Oxidoreductase</keyword>
<gene>
    <name type="primary">acrC</name>
</gene>
<feature type="chain" id="PRO_0000424270" description="Acryloyl-CoA reductase (NADH)">
    <location>
        <begin position="1"/>
        <end position="394"/>
    </location>
</feature>
<feature type="active site" description="Proton acceptor" evidence="1">
    <location>
        <position position="377"/>
    </location>
</feature>
<feature type="binding site" description="in other chain" evidence="1">
    <location>
        <begin position="135"/>
        <end position="144"/>
    </location>
    <ligand>
        <name>FAD</name>
        <dbReference type="ChEBI" id="CHEBI:57692"/>
        <note>ligand shared between dimeric partners</note>
    </ligand>
</feature>
<feature type="binding site" evidence="1">
    <location>
        <position position="144"/>
    </location>
    <ligand>
        <name>substrate</name>
    </ligand>
</feature>
<feature type="binding site" description="in other chain" evidence="1">
    <location>
        <begin position="170"/>
        <end position="172"/>
    </location>
    <ligand>
        <name>FAD</name>
        <dbReference type="ChEBI" id="CHEBI:57692"/>
        <note>ligand shared between dimeric partners</note>
    </ligand>
</feature>
<feature type="binding site" evidence="1">
    <location>
        <begin position="254"/>
        <end position="257"/>
    </location>
    <ligand>
        <name>substrate</name>
    </ligand>
</feature>
<feature type="binding site" evidence="1">
    <location>
        <position position="282"/>
    </location>
    <ligand>
        <name>FAD</name>
        <dbReference type="ChEBI" id="CHEBI:57692"/>
        <note>ligand shared between dimeric partners</note>
    </ligand>
</feature>
<feature type="binding site" description="in other chain" evidence="1">
    <location>
        <position position="293"/>
    </location>
    <ligand>
        <name>FAD</name>
        <dbReference type="ChEBI" id="CHEBI:57692"/>
        <note>ligand shared between dimeric partners</note>
    </ligand>
</feature>
<feature type="binding site" evidence="1">
    <location>
        <begin position="350"/>
        <end position="354"/>
    </location>
    <ligand>
        <name>FAD</name>
        <dbReference type="ChEBI" id="CHEBI:57692"/>
        <note>ligand shared between dimeric partners</note>
    </ligand>
</feature>
<feature type="binding site" evidence="1">
    <location>
        <position position="378"/>
    </location>
    <ligand>
        <name>substrate</name>
    </ligand>
</feature>
<feature type="binding site" description="in other chain" evidence="1">
    <location>
        <begin position="379"/>
        <end position="381"/>
    </location>
    <ligand>
        <name>FAD</name>
        <dbReference type="ChEBI" id="CHEBI:57692"/>
        <note>ligand shared between dimeric partners</note>
    </ligand>
</feature>
<sequence>MFLLKIKKERMKRMDFSLTREQEMLKKLARQFAEIELEPVAEEIDREHVFPAENFKKMAEIGLTGIGIPKEFGGSGGGTLEKVIAVSEFGKKCMASASILSIHLIAPQAIYKYGTKEQKETYLPRLTKGGELGAFALTEPNAGSDAGAVKTTAILDSQTNEYVLNGTKCFISGGGRAGVLVIFALTEPKKGLKGMSAIIVEKGTPGFSIGKVESKMGIAGSETAELIFEDCRVPAANLLGKEGKGFKIAMEALDGARIGVGAQAIGIAEGAIDLSVKYVHERIQFGKPIANLQGIQWYIADMATKTAAARALVEFAAYLEDAGKPFTKESAMCKLNASENARFVTNLALQIHGGYGYMKDYPLERMYRDAKITEIYEGTSEIHKVVIAREVMKR</sequence>
<dbReference type="EC" id="1.3.1.95"/>
<dbReference type="EMBL" id="JN244656">
    <property type="protein sequence ID" value="AEM62998.1"/>
    <property type="molecule type" value="Genomic_DNA"/>
</dbReference>
<dbReference type="SMR" id="G3KIM8"/>
<dbReference type="KEGG" id="ag:AEM62998"/>
<dbReference type="BioCyc" id="MetaCyc:MONOMER-12757"/>
<dbReference type="SABIO-RK" id="G3KIM8"/>
<dbReference type="GO" id="GO:0005737">
    <property type="term" value="C:cytoplasm"/>
    <property type="evidence" value="ECO:0000314"/>
    <property type="project" value="UniProtKB"/>
</dbReference>
<dbReference type="GO" id="GO:0043958">
    <property type="term" value="F:acryloyl-CoA reductase (NADH) activity"/>
    <property type="evidence" value="ECO:0007669"/>
    <property type="project" value="UniProtKB-EC"/>
</dbReference>
<dbReference type="GO" id="GO:0003995">
    <property type="term" value="F:acyl-CoA dehydrogenase activity"/>
    <property type="evidence" value="ECO:0007669"/>
    <property type="project" value="InterPro"/>
</dbReference>
<dbReference type="GO" id="GO:0071949">
    <property type="term" value="F:FAD binding"/>
    <property type="evidence" value="ECO:0000314"/>
    <property type="project" value="UniProtKB"/>
</dbReference>
<dbReference type="GO" id="GO:0016628">
    <property type="term" value="F:oxidoreductase activity, acting on the CH-CH group of donors, NAD or NADP as acceptor"/>
    <property type="evidence" value="ECO:0000314"/>
    <property type="project" value="UniProtKB"/>
</dbReference>
<dbReference type="FunFam" id="2.40.110.10:FF:000009">
    <property type="entry name" value="Acyl-CoA dehydrogenase"/>
    <property type="match status" value="1"/>
</dbReference>
<dbReference type="FunFam" id="1.10.540.10:FF:000002">
    <property type="entry name" value="Acyl-CoA dehydrogenase FadE19"/>
    <property type="match status" value="1"/>
</dbReference>
<dbReference type="FunFam" id="1.20.140.10:FF:000004">
    <property type="entry name" value="Acyl-CoA dehydrogenase FadE25"/>
    <property type="match status" value="1"/>
</dbReference>
<dbReference type="Gene3D" id="1.10.540.10">
    <property type="entry name" value="Acyl-CoA dehydrogenase/oxidase, N-terminal domain"/>
    <property type="match status" value="1"/>
</dbReference>
<dbReference type="Gene3D" id="2.40.110.10">
    <property type="entry name" value="Butyryl-CoA Dehydrogenase, subunit A, domain 2"/>
    <property type="match status" value="1"/>
</dbReference>
<dbReference type="Gene3D" id="1.20.140.10">
    <property type="entry name" value="Butyryl-CoA Dehydrogenase, subunit A, domain 3"/>
    <property type="match status" value="1"/>
</dbReference>
<dbReference type="InterPro" id="IPR050042">
    <property type="entry name" value="AcrC"/>
</dbReference>
<dbReference type="InterPro" id="IPR006089">
    <property type="entry name" value="Acyl-CoA_DH_CS"/>
</dbReference>
<dbReference type="InterPro" id="IPR006091">
    <property type="entry name" value="Acyl-CoA_Oxase/DH_mid-dom"/>
</dbReference>
<dbReference type="InterPro" id="IPR046373">
    <property type="entry name" value="Acyl-CoA_Oxase/DH_mid-dom_sf"/>
</dbReference>
<dbReference type="InterPro" id="IPR036250">
    <property type="entry name" value="AcylCo_DH-like_C"/>
</dbReference>
<dbReference type="InterPro" id="IPR009075">
    <property type="entry name" value="AcylCo_DH/oxidase_C"/>
</dbReference>
<dbReference type="InterPro" id="IPR013786">
    <property type="entry name" value="AcylCoA_DH/ox_N"/>
</dbReference>
<dbReference type="InterPro" id="IPR037069">
    <property type="entry name" value="AcylCoA_DH/ox_N_sf"/>
</dbReference>
<dbReference type="InterPro" id="IPR009100">
    <property type="entry name" value="AcylCoA_DH/oxidase_NM_dom_sf"/>
</dbReference>
<dbReference type="NCBIfam" id="NF042972">
    <property type="entry name" value="AcrlCoAredClosAcrC"/>
    <property type="match status" value="1"/>
</dbReference>
<dbReference type="PANTHER" id="PTHR43884">
    <property type="entry name" value="ACYL-COA DEHYDROGENASE"/>
    <property type="match status" value="1"/>
</dbReference>
<dbReference type="PANTHER" id="PTHR43884:SF12">
    <property type="entry name" value="ISOVALERYL-COA DEHYDROGENASE, MITOCHONDRIAL-RELATED"/>
    <property type="match status" value="1"/>
</dbReference>
<dbReference type="Pfam" id="PF00441">
    <property type="entry name" value="Acyl-CoA_dh_1"/>
    <property type="match status" value="1"/>
</dbReference>
<dbReference type="Pfam" id="PF02770">
    <property type="entry name" value="Acyl-CoA_dh_M"/>
    <property type="match status" value="1"/>
</dbReference>
<dbReference type="Pfam" id="PF02771">
    <property type="entry name" value="Acyl-CoA_dh_N"/>
    <property type="match status" value="1"/>
</dbReference>
<dbReference type="PIRSF" id="PIRSF016578">
    <property type="entry name" value="HsaA"/>
    <property type="match status" value="1"/>
</dbReference>
<dbReference type="SUPFAM" id="SSF47203">
    <property type="entry name" value="Acyl-CoA dehydrogenase C-terminal domain-like"/>
    <property type="match status" value="1"/>
</dbReference>
<dbReference type="SUPFAM" id="SSF56645">
    <property type="entry name" value="Acyl-CoA dehydrogenase NM domain-like"/>
    <property type="match status" value="1"/>
</dbReference>
<dbReference type="PROSITE" id="PS00072">
    <property type="entry name" value="ACYL_COA_DH_1"/>
    <property type="match status" value="1"/>
</dbReference>
<dbReference type="PROSITE" id="PS00073">
    <property type="entry name" value="ACYL_COA_DH_2"/>
    <property type="match status" value="1"/>
</dbReference>
<organism>
    <name type="scientific">Anaerotignum propionicum</name>
    <name type="common">Clostridium propionicum</name>
    <dbReference type="NCBI Taxonomy" id="28446"/>
    <lineage>
        <taxon>Bacteria</taxon>
        <taxon>Bacillati</taxon>
        <taxon>Bacillota</taxon>
        <taxon>Clostridia</taxon>
        <taxon>Lachnospirales</taxon>
        <taxon>Anaerotignaceae</taxon>
        <taxon>Anaerotignum</taxon>
    </lineage>
</organism>
<name>ACRC_ANAPI</name>